<keyword id="KW-0963">Cytoplasm</keyword>
<keyword id="KW-0346">Stress response</keyword>
<organism>
    <name type="scientific">Salmonella heidelberg (strain SL476)</name>
    <dbReference type="NCBI Taxonomy" id="454169"/>
    <lineage>
        <taxon>Bacteria</taxon>
        <taxon>Pseudomonadati</taxon>
        <taxon>Pseudomonadota</taxon>
        <taxon>Gammaproteobacteria</taxon>
        <taxon>Enterobacterales</taxon>
        <taxon>Enterobacteriaceae</taxon>
        <taxon>Salmonella</taxon>
    </lineage>
</organism>
<evidence type="ECO:0000255" key="1">
    <source>
        <dbReference type="HAMAP-Rule" id="MF_01194"/>
    </source>
</evidence>
<evidence type="ECO:0000256" key="2">
    <source>
        <dbReference type="SAM" id="MobiDB-lite"/>
    </source>
</evidence>
<protein>
    <recommendedName>
        <fullName evidence="1">Heat shock protein HspQ</fullName>
    </recommendedName>
</protein>
<name>HSPQ_SALHS</name>
<reference key="1">
    <citation type="journal article" date="2011" name="J. Bacteriol.">
        <title>Comparative genomics of 28 Salmonella enterica isolates: evidence for CRISPR-mediated adaptive sublineage evolution.</title>
        <authorList>
            <person name="Fricke W.F."/>
            <person name="Mammel M.K."/>
            <person name="McDermott P.F."/>
            <person name="Tartera C."/>
            <person name="White D.G."/>
            <person name="Leclerc J.E."/>
            <person name="Ravel J."/>
            <person name="Cebula T.A."/>
        </authorList>
    </citation>
    <scope>NUCLEOTIDE SEQUENCE [LARGE SCALE GENOMIC DNA]</scope>
    <source>
        <strain>SL476</strain>
    </source>
</reference>
<accession>B4TE05</accession>
<dbReference type="EMBL" id="CP001120">
    <property type="protein sequence ID" value="ACF68390.1"/>
    <property type="molecule type" value="Genomic_DNA"/>
</dbReference>
<dbReference type="RefSeq" id="WP_000561983.1">
    <property type="nucleotide sequence ID" value="NC_011083.1"/>
</dbReference>
<dbReference type="SMR" id="B4TE05"/>
<dbReference type="GeneID" id="66755429"/>
<dbReference type="KEGG" id="seh:SeHA_C1188"/>
<dbReference type="HOGENOM" id="CLU_123865_1_0_6"/>
<dbReference type="Proteomes" id="UP000001866">
    <property type="component" value="Chromosome"/>
</dbReference>
<dbReference type="GO" id="GO:0005737">
    <property type="term" value="C:cytoplasm"/>
    <property type="evidence" value="ECO:0007669"/>
    <property type="project" value="UniProtKB-SubCell"/>
</dbReference>
<dbReference type="GO" id="GO:0003677">
    <property type="term" value="F:DNA binding"/>
    <property type="evidence" value="ECO:0007669"/>
    <property type="project" value="InterPro"/>
</dbReference>
<dbReference type="GO" id="GO:0009408">
    <property type="term" value="P:response to heat"/>
    <property type="evidence" value="ECO:0007669"/>
    <property type="project" value="UniProtKB-UniRule"/>
</dbReference>
<dbReference type="Gene3D" id="2.30.30.390">
    <property type="entry name" value="Hemimethylated DNA-binding domain"/>
    <property type="match status" value="1"/>
</dbReference>
<dbReference type="HAMAP" id="MF_01194">
    <property type="entry name" value="HspQ"/>
    <property type="match status" value="1"/>
</dbReference>
<dbReference type="InterPro" id="IPR011722">
    <property type="entry name" value="Hemimethylated_DNA-bd_dom"/>
</dbReference>
<dbReference type="InterPro" id="IPR036623">
    <property type="entry name" value="Hemimethylated_DNA-bd_sf"/>
</dbReference>
<dbReference type="InterPro" id="IPR022866">
    <property type="entry name" value="HspQ"/>
</dbReference>
<dbReference type="NCBIfam" id="NF010729">
    <property type="entry name" value="PRK14129.1"/>
    <property type="match status" value="1"/>
</dbReference>
<dbReference type="NCBIfam" id="TIGR02097">
    <property type="entry name" value="yccV"/>
    <property type="match status" value="1"/>
</dbReference>
<dbReference type="Pfam" id="PF08755">
    <property type="entry name" value="YccV-like"/>
    <property type="match status" value="1"/>
</dbReference>
<dbReference type="SMART" id="SM00992">
    <property type="entry name" value="YccV-like"/>
    <property type="match status" value="1"/>
</dbReference>
<dbReference type="SUPFAM" id="SSF141255">
    <property type="entry name" value="YccV-like"/>
    <property type="match status" value="1"/>
</dbReference>
<comment type="function">
    <text evidence="1">Involved in the degradation of certain denaturated proteins, including DnaA, during heat shock stress.</text>
</comment>
<comment type="subcellular location">
    <subcellularLocation>
        <location evidence="1">Cytoplasm</location>
    </subcellularLocation>
</comment>
<comment type="similarity">
    <text evidence="1">Belongs to the HspQ family.</text>
</comment>
<proteinExistence type="inferred from homology"/>
<feature type="chain" id="PRO_1000138417" description="Heat shock protein HspQ">
    <location>
        <begin position="1"/>
        <end position="105"/>
    </location>
</feature>
<feature type="region of interest" description="Disordered" evidence="2">
    <location>
        <begin position="76"/>
        <end position="105"/>
    </location>
</feature>
<sequence>MIASKFGIGQQVRHSLLGYLGVVVDIDPEYSLDEPSPDELAVNDELRAAPWYHVVMEDDDGQPVHTYLAEAQLRSEMRDEHPEQPSMDELARTIRKQLQAPRLRN</sequence>
<gene>
    <name evidence="1" type="primary">hspQ</name>
    <name type="ordered locus">SeHA_C1188</name>
</gene>